<evidence type="ECO:0000255" key="1">
    <source>
        <dbReference type="HAMAP-Rule" id="MF_00537"/>
    </source>
</evidence>
<evidence type="ECO:0000305" key="2"/>
<keyword id="KW-0687">Ribonucleoprotein</keyword>
<keyword id="KW-0689">Ribosomal protein</keyword>
<keyword id="KW-0694">RNA-binding</keyword>
<keyword id="KW-0699">rRNA-binding</keyword>
<organism>
    <name type="scientific">Bacillus pumilus (strain SAFR-032)</name>
    <dbReference type="NCBI Taxonomy" id="315750"/>
    <lineage>
        <taxon>Bacteria</taxon>
        <taxon>Bacillati</taxon>
        <taxon>Bacillota</taxon>
        <taxon>Bacilli</taxon>
        <taxon>Bacillales</taxon>
        <taxon>Bacillaceae</taxon>
        <taxon>Bacillus</taxon>
    </lineage>
</organism>
<dbReference type="EMBL" id="CP000813">
    <property type="protein sequence ID" value="ABV63965.1"/>
    <property type="molecule type" value="Genomic_DNA"/>
</dbReference>
<dbReference type="RefSeq" id="WP_012011533.1">
    <property type="nucleotide sequence ID" value="NZ_VEIS01000002.1"/>
</dbReference>
<dbReference type="SMR" id="A8FI98"/>
<dbReference type="STRING" id="315750.BPUM_3312"/>
<dbReference type="GeneID" id="5622602"/>
<dbReference type="KEGG" id="bpu:BPUM_3312"/>
<dbReference type="eggNOG" id="COG0199">
    <property type="taxonomic scope" value="Bacteria"/>
</dbReference>
<dbReference type="HOGENOM" id="CLU_139869_0_0_9"/>
<dbReference type="OrthoDB" id="9810484at2"/>
<dbReference type="Proteomes" id="UP000001355">
    <property type="component" value="Chromosome"/>
</dbReference>
<dbReference type="GO" id="GO:0005737">
    <property type="term" value="C:cytoplasm"/>
    <property type="evidence" value="ECO:0007669"/>
    <property type="project" value="UniProtKB-ARBA"/>
</dbReference>
<dbReference type="GO" id="GO:0015935">
    <property type="term" value="C:small ribosomal subunit"/>
    <property type="evidence" value="ECO:0007669"/>
    <property type="project" value="TreeGrafter"/>
</dbReference>
<dbReference type="GO" id="GO:0019843">
    <property type="term" value="F:rRNA binding"/>
    <property type="evidence" value="ECO:0007669"/>
    <property type="project" value="UniProtKB-UniRule"/>
</dbReference>
<dbReference type="GO" id="GO:0003735">
    <property type="term" value="F:structural constituent of ribosome"/>
    <property type="evidence" value="ECO:0007669"/>
    <property type="project" value="InterPro"/>
</dbReference>
<dbReference type="GO" id="GO:0006412">
    <property type="term" value="P:translation"/>
    <property type="evidence" value="ECO:0007669"/>
    <property type="project" value="UniProtKB-UniRule"/>
</dbReference>
<dbReference type="FunFam" id="4.10.830.10:FF:000003">
    <property type="entry name" value="30S ribosomal protein S14"/>
    <property type="match status" value="1"/>
</dbReference>
<dbReference type="Gene3D" id="4.10.830.10">
    <property type="entry name" value="30s Ribosomal Protein S14, Chain N"/>
    <property type="match status" value="1"/>
</dbReference>
<dbReference type="HAMAP" id="MF_00537">
    <property type="entry name" value="Ribosomal_uS14_1"/>
    <property type="match status" value="1"/>
</dbReference>
<dbReference type="InterPro" id="IPR001209">
    <property type="entry name" value="Ribosomal_uS14"/>
</dbReference>
<dbReference type="InterPro" id="IPR023036">
    <property type="entry name" value="Ribosomal_uS14_bac/plastid"/>
</dbReference>
<dbReference type="InterPro" id="IPR018271">
    <property type="entry name" value="Ribosomal_uS14_CS"/>
</dbReference>
<dbReference type="InterPro" id="IPR043140">
    <property type="entry name" value="Ribosomal_uS14_sf"/>
</dbReference>
<dbReference type="NCBIfam" id="NF006477">
    <property type="entry name" value="PRK08881.1"/>
    <property type="match status" value="1"/>
</dbReference>
<dbReference type="PANTHER" id="PTHR19836">
    <property type="entry name" value="30S RIBOSOMAL PROTEIN S14"/>
    <property type="match status" value="1"/>
</dbReference>
<dbReference type="PANTHER" id="PTHR19836:SF19">
    <property type="entry name" value="SMALL RIBOSOMAL SUBUNIT PROTEIN US14M"/>
    <property type="match status" value="1"/>
</dbReference>
<dbReference type="Pfam" id="PF00253">
    <property type="entry name" value="Ribosomal_S14"/>
    <property type="match status" value="1"/>
</dbReference>
<dbReference type="SUPFAM" id="SSF57716">
    <property type="entry name" value="Glucocorticoid receptor-like (DNA-binding domain)"/>
    <property type="match status" value="1"/>
</dbReference>
<dbReference type="PROSITE" id="PS00527">
    <property type="entry name" value="RIBOSOMAL_S14"/>
    <property type="match status" value="1"/>
</dbReference>
<protein>
    <recommendedName>
        <fullName evidence="1">Small ribosomal subunit protein uS14A</fullName>
    </recommendedName>
    <alternativeName>
        <fullName evidence="2">30S ribosomal protein S14</fullName>
    </alternativeName>
</protein>
<feature type="chain" id="PRO_1000128304" description="Small ribosomal subunit protein uS14A">
    <location>
        <begin position="1"/>
        <end position="89"/>
    </location>
</feature>
<proteinExistence type="inferred from homology"/>
<reference key="1">
    <citation type="journal article" date="2007" name="PLoS ONE">
        <title>Paradoxical DNA repair and peroxide resistance gene conservation in Bacillus pumilus SAFR-032.</title>
        <authorList>
            <person name="Gioia J."/>
            <person name="Yerrapragada S."/>
            <person name="Qin X."/>
            <person name="Jiang H."/>
            <person name="Igboeli O.C."/>
            <person name="Muzny D."/>
            <person name="Dugan-Rocha S."/>
            <person name="Ding Y."/>
            <person name="Hawes A."/>
            <person name="Liu W."/>
            <person name="Perez L."/>
            <person name="Kovar C."/>
            <person name="Dinh H."/>
            <person name="Lee S."/>
            <person name="Nazareth L."/>
            <person name="Blyth P."/>
            <person name="Holder M."/>
            <person name="Buhay C."/>
            <person name="Tirumalai M.R."/>
            <person name="Liu Y."/>
            <person name="Dasgupta I."/>
            <person name="Bokhetache L."/>
            <person name="Fujita M."/>
            <person name="Karouia F."/>
            <person name="Eswara Moorthy P."/>
            <person name="Siefert J."/>
            <person name="Uzman A."/>
            <person name="Buzumbo P."/>
            <person name="Verma A."/>
            <person name="Zwiya H."/>
            <person name="McWilliams B.D."/>
            <person name="Olowu A."/>
            <person name="Clinkenbeard K.D."/>
            <person name="Newcombe D."/>
            <person name="Golebiewski L."/>
            <person name="Petrosino J.F."/>
            <person name="Nicholson W.L."/>
            <person name="Fox G.E."/>
            <person name="Venkateswaran K."/>
            <person name="Highlander S.K."/>
            <person name="Weinstock G.M."/>
        </authorList>
    </citation>
    <scope>NUCLEOTIDE SEQUENCE [LARGE SCALE GENOMIC DNA]</scope>
    <source>
        <strain>SAFR-032</strain>
    </source>
</reference>
<comment type="function">
    <text evidence="1">Binds 16S rRNA, required for the assembly of 30S particles and may also be responsible for determining the conformation of the 16S rRNA at the A site.</text>
</comment>
<comment type="subunit">
    <text evidence="1">Part of the 30S ribosomal subunit. Contacts proteins S3 and S10.</text>
</comment>
<comment type="similarity">
    <text evidence="1">Belongs to the universal ribosomal protein uS14 family.</text>
</comment>
<sequence length="89" mass="10549">MAKKSKIAKEKKRQQLVLKYAELRKELKEQGDYEALRKLPRDSSPTRLKNRCELTGRPRGYLRKFKMSRIAFRELAYKGHIPGVKKSSW</sequence>
<accession>A8FI98</accession>
<name>RS14_BACP2</name>
<gene>
    <name evidence="1" type="primary">rpsN</name>
    <name type="ordered locus">BPUM_3312</name>
</gene>